<evidence type="ECO:0000250" key="1"/>
<evidence type="ECO:0000255" key="2"/>
<evidence type="ECO:0000255" key="3">
    <source>
        <dbReference type="PROSITE-ProRule" id="PRU00096"/>
    </source>
</evidence>
<evidence type="ECO:0000305" key="4"/>
<reference key="1">
    <citation type="submission" date="2004-11" db="EMBL/GenBank/DDBJ databases">
        <authorList>
            <consortium name="The German cDNA consortium"/>
        </authorList>
    </citation>
    <scope>NUCLEOTIDE SEQUENCE [LARGE SCALE MRNA]</scope>
    <source>
        <tissue>Kidney</tissue>
    </source>
</reference>
<proteinExistence type="evidence at transcript level"/>
<dbReference type="EMBL" id="CR859946">
    <property type="protein sequence ID" value="CAH92101.1"/>
    <property type="molecule type" value="mRNA"/>
</dbReference>
<dbReference type="RefSeq" id="NP_001126226.1">
    <property type="nucleotide sequence ID" value="NM_001132754.1"/>
</dbReference>
<dbReference type="SMR" id="Q5R809"/>
<dbReference type="STRING" id="9601.ENSPPYP00000001331"/>
<dbReference type="GeneID" id="100173195"/>
<dbReference type="KEGG" id="pon:100173195"/>
<dbReference type="CTD" id="50999"/>
<dbReference type="eggNOG" id="KOG3287">
    <property type="taxonomic scope" value="Eukaryota"/>
</dbReference>
<dbReference type="InParanoid" id="Q5R809"/>
<dbReference type="OrthoDB" id="5976732at2759"/>
<dbReference type="Proteomes" id="UP000001595">
    <property type="component" value="Unplaced"/>
</dbReference>
<dbReference type="GO" id="GO:0005801">
    <property type="term" value="C:cis-Golgi network"/>
    <property type="evidence" value="ECO:0000250"/>
    <property type="project" value="UniProtKB"/>
</dbReference>
<dbReference type="GO" id="GO:0070971">
    <property type="term" value="C:endoplasmic reticulum exit site"/>
    <property type="evidence" value="ECO:0000250"/>
    <property type="project" value="UniProtKB"/>
</dbReference>
<dbReference type="GO" id="GO:0005789">
    <property type="term" value="C:endoplasmic reticulum membrane"/>
    <property type="evidence" value="ECO:0007669"/>
    <property type="project" value="UniProtKB-SubCell"/>
</dbReference>
<dbReference type="GO" id="GO:0005793">
    <property type="term" value="C:endoplasmic reticulum-Golgi intermediate compartment"/>
    <property type="evidence" value="ECO:0000250"/>
    <property type="project" value="UniProtKB"/>
</dbReference>
<dbReference type="GO" id="GO:0033116">
    <property type="term" value="C:endoplasmic reticulum-Golgi intermediate compartment membrane"/>
    <property type="evidence" value="ECO:0007669"/>
    <property type="project" value="UniProtKB-SubCell"/>
</dbReference>
<dbReference type="GO" id="GO:0090161">
    <property type="term" value="P:Golgi ribbon formation"/>
    <property type="evidence" value="ECO:0000250"/>
    <property type="project" value="UniProtKB"/>
</dbReference>
<dbReference type="GO" id="GO:0015031">
    <property type="term" value="P:protein transport"/>
    <property type="evidence" value="ECO:0007669"/>
    <property type="project" value="UniProtKB-KW"/>
</dbReference>
<dbReference type="InterPro" id="IPR015720">
    <property type="entry name" value="Emp24-like"/>
</dbReference>
<dbReference type="InterPro" id="IPR009038">
    <property type="entry name" value="GOLD_dom"/>
</dbReference>
<dbReference type="InterPro" id="IPR036598">
    <property type="entry name" value="GOLD_dom_sf"/>
</dbReference>
<dbReference type="PANTHER" id="PTHR22811">
    <property type="entry name" value="TRANSMEMBRANE EMP24 DOMAIN-CONTAINING PROTEIN"/>
    <property type="match status" value="1"/>
</dbReference>
<dbReference type="Pfam" id="PF01105">
    <property type="entry name" value="EMP24_GP25L"/>
    <property type="match status" value="1"/>
</dbReference>
<dbReference type="SMART" id="SM01190">
    <property type="entry name" value="EMP24_GP25L"/>
    <property type="match status" value="1"/>
</dbReference>
<dbReference type="SUPFAM" id="SSF101576">
    <property type="entry name" value="Supernatant protein factor (SPF), C-terminal domain"/>
    <property type="match status" value="1"/>
</dbReference>
<dbReference type="PROSITE" id="PS50866">
    <property type="entry name" value="GOLD"/>
    <property type="match status" value="1"/>
</dbReference>
<sequence length="229" mass="26051">MGDKIWLPFPVLLLAALPPVLLPGAAGFTPSLDSDFTFTLPAGQRECFYQPMPLKASLEIEYQVLDGAGLDIDFHLASPEGKTLVFEQRKSDGVHTVETEVGDYMFCFDNTFSTISEKVIFFELILDNMGEQAQEQEDWKKYITGTDMLDMKLEDILESINSIKSRLSKSGHIQTLLRAFEARDRNIQESNFDRVNFWSMVNLVVMVVVSAIQVYMLKSLFEDKRKSRT</sequence>
<name>TMED5_PONAB</name>
<protein>
    <recommendedName>
        <fullName>Transmembrane emp24 domain-containing protein 5</fullName>
    </recommendedName>
    <alternativeName>
        <fullName>p24 family protein gamma-2</fullName>
        <shortName>p24gamma2</shortName>
    </alternativeName>
</protein>
<gene>
    <name type="primary">TMED5</name>
</gene>
<keyword id="KW-0256">Endoplasmic reticulum</keyword>
<keyword id="KW-0333">Golgi apparatus</keyword>
<keyword id="KW-0472">Membrane</keyword>
<keyword id="KW-0653">Protein transport</keyword>
<keyword id="KW-1185">Reference proteome</keyword>
<keyword id="KW-0732">Signal</keyword>
<keyword id="KW-0812">Transmembrane</keyword>
<keyword id="KW-1133">Transmembrane helix</keyword>
<keyword id="KW-0813">Transport</keyword>
<feature type="signal peptide" evidence="2">
    <location>
        <begin position="1"/>
        <end position="27"/>
    </location>
</feature>
<feature type="chain" id="PRO_0000010391" description="Transmembrane emp24 domain-containing protein 5">
    <location>
        <begin position="28"/>
        <end position="229"/>
    </location>
</feature>
<feature type="topological domain" description="Lumenal" evidence="2">
    <location>
        <begin position="28"/>
        <end position="196"/>
    </location>
</feature>
<feature type="transmembrane region" description="Helical" evidence="2">
    <location>
        <begin position="197"/>
        <end position="217"/>
    </location>
</feature>
<feature type="topological domain" description="Cytoplasmic" evidence="2">
    <location>
        <begin position="218"/>
        <end position="229"/>
    </location>
</feature>
<feature type="domain" description="GOLD" evidence="3">
    <location>
        <begin position="45"/>
        <end position="126"/>
    </location>
</feature>
<accession>Q5R809</accession>
<organism>
    <name type="scientific">Pongo abelii</name>
    <name type="common">Sumatran orangutan</name>
    <name type="synonym">Pongo pygmaeus abelii</name>
    <dbReference type="NCBI Taxonomy" id="9601"/>
    <lineage>
        <taxon>Eukaryota</taxon>
        <taxon>Metazoa</taxon>
        <taxon>Chordata</taxon>
        <taxon>Craniata</taxon>
        <taxon>Vertebrata</taxon>
        <taxon>Euteleostomi</taxon>
        <taxon>Mammalia</taxon>
        <taxon>Eutheria</taxon>
        <taxon>Euarchontoglires</taxon>
        <taxon>Primates</taxon>
        <taxon>Haplorrhini</taxon>
        <taxon>Catarrhini</taxon>
        <taxon>Hominidae</taxon>
        <taxon>Pongo</taxon>
    </lineage>
</organism>
<comment type="function">
    <text evidence="1">Potential role in vesicular protein trafficking, mainly in the early secretory pathway. Required for the maintenance of the Golgi apparatus; involved in protein exchange between Golgi stacks during assembly. Probably not required for COPI-vesicle-mediated retrograde transport (By similarity).</text>
</comment>
<comment type="subunit">
    <text evidence="1">Interacts with TMED9 and TMED10.</text>
</comment>
<comment type="subcellular location">
    <subcellularLocation>
        <location evidence="1">Endoplasmic reticulum membrane</location>
        <topology evidence="1">Single-pass type I membrane protein</topology>
    </subcellularLocation>
    <subcellularLocation>
        <location evidence="1">Golgi apparatus</location>
        <location evidence="1">cis-Golgi network membrane</location>
        <topology evidence="1">Single-pass type I membrane protein</topology>
    </subcellularLocation>
    <subcellularLocation>
        <location evidence="1">Endoplasmic reticulum-Golgi intermediate compartment membrane</location>
        <topology evidence="1">Single-pass type I membrane protein</topology>
    </subcellularLocation>
    <text evidence="1">Probably cycles between compartments of the early secretatory pathway.</text>
</comment>
<comment type="similarity">
    <text evidence="4">Belongs to the EMP24/GP25L family.</text>
</comment>